<organism>
    <name type="scientific">Rickettsia typhi (strain ATCC VR-144 / Wilmington)</name>
    <dbReference type="NCBI Taxonomy" id="257363"/>
    <lineage>
        <taxon>Bacteria</taxon>
        <taxon>Pseudomonadati</taxon>
        <taxon>Pseudomonadota</taxon>
        <taxon>Alphaproteobacteria</taxon>
        <taxon>Rickettsiales</taxon>
        <taxon>Rickettsiaceae</taxon>
        <taxon>Rickettsieae</taxon>
        <taxon>Rickettsia</taxon>
        <taxon>typhus group</taxon>
    </lineage>
</organism>
<accession>Q68XD5</accession>
<keyword id="KW-0687">Ribonucleoprotein</keyword>
<keyword id="KW-0689">Ribosomal protein</keyword>
<feature type="chain" id="PRO_0000272383" description="Large ribosomal subunit protein uL13">
    <location>
        <begin position="1"/>
        <end position="155"/>
    </location>
</feature>
<proteinExistence type="inferred from homology"/>
<comment type="function">
    <text evidence="1">This protein is one of the early assembly proteins of the 50S ribosomal subunit, although it is not seen to bind rRNA by itself. It is important during the early stages of 50S assembly.</text>
</comment>
<comment type="subunit">
    <text evidence="1">Part of the 50S ribosomal subunit.</text>
</comment>
<comment type="similarity">
    <text evidence="1">Belongs to the universal ribosomal protein uL13 family.</text>
</comment>
<protein>
    <recommendedName>
        <fullName evidence="1">Large ribosomal subunit protein uL13</fullName>
    </recommendedName>
    <alternativeName>
        <fullName evidence="2">50S ribosomal protein L13</fullName>
    </alternativeName>
</protein>
<reference key="1">
    <citation type="journal article" date="2004" name="J. Bacteriol.">
        <title>Complete genome sequence of Rickettsia typhi and comparison with sequences of other Rickettsiae.</title>
        <authorList>
            <person name="McLeod M.P."/>
            <person name="Qin X."/>
            <person name="Karpathy S.E."/>
            <person name="Gioia J."/>
            <person name="Highlander S.K."/>
            <person name="Fox G.E."/>
            <person name="McNeill T.Z."/>
            <person name="Jiang H."/>
            <person name="Muzny D."/>
            <person name="Jacob L.S."/>
            <person name="Hawes A.C."/>
            <person name="Sodergren E."/>
            <person name="Gill R."/>
            <person name="Hume J."/>
            <person name="Morgan M."/>
            <person name="Fan G."/>
            <person name="Amin A.G."/>
            <person name="Gibbs R.A."/>
            <person name="Hong C."/>
            <person name="Yu X.-J."/>
            <person name="Walker D.H."/>
            <person name="Weinstock G.M."/>
        </authorList>
    </citation>
    <scope>NUCLEOTIDE SEQUENCE [LARGE SCALE GENOMIC DNA]</scope>
    <source>
        <strain>ATCC VR-144 / Wilmington</strain>
    </source>
</reference>
<evidence type="ECO:0000255" key="1">
    <source>
        <dbReference type="HAMAP-Rule" id="MF_01366"/>
    </source>
</evidence>
<evidence type="ECO:0000305" key="2"/>
<sequence length="155" mass="17575">MKTYSAKPSEIEKKWWVIDAKNIVLGRLASRVAIMLRGKHKPSFTPHLDCGDNIIIINAEHIKLTGKKLNHKDGKVYYRHTGFPGGIKDTTAGKILSGKYPERVIKMAVKRMITRNVLGAKQMSNLYVYANCEHPHMAQQPTVYDFASKNPKNKK</sequence>
<name>RL13_RICTY</name>
<dbReference type="EMBL" id="AE017197">
    <property type="protein sequence ID" value="AAU03707.1"/>
    <property type="molecule type" value="Genomic_DNA"/>
</dbReference>
<dbReference type="RefSeq" id="WP_011190693.1">
    <property type="nucleotide sequence ID" value="NC_006142.1"/>
</dbReference>
<dbReference type="SMR" id="Q68XD5"/>
<dbReference type="KEGG" id="rty:RT0225"/>
<dbReference type="eggNOG" id="COG0102">
    <property type="taxonomic scope" value="Bacteria"/>
</dbReference>
<dbReference type="HOGENOM" id="CLU_082184_2_0_5"/>
<dbReference type="OrthoDB" id="9801330at2"/>
<dbReference type="Proteomes" id="UP000000604">
    <property type="component" value="Chromosome"/>
</dbReference>
<dbReference type="GO" id="GO:0022625">
    <property type="term" value="C:cytosolic large ribosomal subunit"/>
    <property type="evidence" value="ECO:0007669"/>
    <property type="project" value="TreeGrafter"/>
</dbReference>
<dbReference type="GO" id="GO:0003729">
    <property type="term" value="F:mRNA binding"/>
    <property type="evidence" value="ECO:0007669"/>
    <property type="project" value="TreeGrafter"/>
</dbReference>
<dbReference type="GO" id="GO:0003735">
    <property type="term" value="F:structural constituent of ribosome"/>
    <property type="evidence" value="ECO:0007669"/>
    <property type="project" value="InterPro"/>
</dbReference>
<dbReference type="GO" id="GO:0017148">
    <property type="term" value="P:negative regulation of translation"/>
    <property type="evidence" value="ECO:0007669"/>
    <property type="project" value="TreeGrafter"/>
</dbReference>
<dbReference type="GO" id="GO:0006412">
    <property type="term" value="P:translation"/>
    <property type="evidence" value="ECO:0007669"/>
    <property type="project" value="UniProtKB-UniRule"/>
</dbReference>
<dbReference type="CDD" id="cd00392">
    <property type="entry name" value="Ribosomal_L13"/>
    <property type="match status" value="1"/>
</dbReference>
<dbReference type="Gene3D" id="3.90.1180.10">
    <property type="entry name" value="Ribosomal protein L13"/>
    <property type="match status" value="1"/>
</dbReference>
<dbReference type="HAMAP" id="MF_01366">
    <property type="entry name" value="Ribosomal_uL13"/>
    <property type="match status" value="1"/>
</dbReference>
<dbReference type="InterPro" id="IPR005822">
    <property type="entry name" value="Ribosomal_uL13"/>
</dbReference>
<dbReference type="InterPro" id="IPR005823">
    <property type="entry name" value="Ribosomal_uL13_bac-type"/>
</dbReference>
<dbReference type="InterPro" id="IPR023563">
    <property type="entry name" value="Ribosomal_uL13_CS"/>
</dbReference>
<dbReference type="InterPro" id="IPR036899">
    <property type="entry name" value="Ribosomal_uL13_sf"/>
</dbReference>
<dbReference type="NCBIfam" id="TIGR01066">
    <property type="entry name" value="rplM_bact"/>
    <property type="match status" value="1"/>
</dbReference>
<dbReference type="PANTHER" id="PTHR11545:SF2">
    <property type="entry name" value="LARGE RIBOSOMAL SUBUNIT PROTEIN UL13M"/>
    <property type="match status" value="1"/>
</dbReference>
<dbReference type="PANTHER" id="PTHR11545">
    <property type="entry name" value="RIBOSOMAL PROTEIN L13"/>
    <property type="match status" value="1"/>
</dbReference>
<dbReference type="Pfam" id="PF00572">
    <property type="entry name" value="Ribosomal_L13"/>
    <property type="match status" value="1"/>
</dbReference>
<dbReference type="PIRSF" id="PIRSF002181">
    <property type="entry name" value="Ribosomal_L13"/>
    <property type="match status" value="1"/>
</dbReference>
<dbReference type="SUPFAM" id="SSF52161">
    <property type="entry name" value="Ribosomal protein L13"/>
    <property type="match status" value="1"/>
</dbReference>
<dbReference type="PROSITE" id="PS00783">
    <property type="entry name" value="RIBOSOMAL_L13"/>
    <property type="match status" value="1"/>
</dbReference>
<gene>
    <name evidence="1" type="primary">rplM</name>
    <name type="ordered locus">RT0225</name>
</gene>